<reference key="1">
    <citation type="journal article" date="1996" name="Mol. Microbiol.">
        <title>Identification and characterization of genes required for post-translational modification of Campylobacter coli VC167 flagellin.</title>
        <authorList>
            <person name="Guerry P."/>
            <person name="Doig P."/>
            <person name="Alm R.A."/>
            <person name="Burr D.H."/>
            <person name="Kinsella N."/>
            <person name="Trust T.J."/>
        </authorList>
    </citation>
    <scope>NUCLEOTIDE SEQUENCE [GENOMIC DNA]</scope>
    <source>
        <strain>VC167</strain>
    </source>
</reference>
<sequence length="256" mass="28489">MLENKIIFVAGACGRIGKALCKKILQNKGIAILADINENHLSILKTELENEFKKELLSLRLDITSKESLNCAIDQAFEKYSKIDGFVNSSYPVGKDWGKIAYYEASYEQICESLNLHLGGFILASQEFVKFFKKQSYGNIINLSSIMGVFAPKFENYENTTMQSSLEYSVIKAGINHLGAWLAKELFNTNIRVNTLASGGILDNQANIFLEKYRKCCASKGMLDAEDICGTLVFLLSDESKFVTGQTLVVDDGWGL</sequence>
<feature type="chain" id="PRO_0000054752" description="Post-translational flagellin modification protein A">
    <location>
        <begin position="1"/>
        <end position="256"/>
    </location>
</feature>
<feature type="active site" description="Proton acceptor" evidence="1">
    <location>
        <position position="168"/>
    </location>
</feature>
<feature type="binding site" evidence="1">
    <location>
        <position position="145"/>
    </location>
    <ligand>
        <name>substrate</name>
    </ligand>
</feature>
<protein>
    <recommendedName>
        <fullName>Post-translational flagellin modification protein A</fullName>
    </recommendedName>
</protein>
<accession>Q45983</accession>
<dbReference type="EMBL" id="AY102621">
    <property type="protein sequence ID" value="AAM76282.1"/>
    <property type="molecule type" value="Genomic_DNA"/>
</dbReference>
<dbReference type="PIR" id="S70686">
    <property type="entry name" value="S70686"/>
</dbReference>
<dbReference type="RefSeq" id="WP_002838726.1">
    <property type="nucleotide sequence ID" value="NZ_VEWG01000014.1"/>
</dbReference>
<dbReference type="SMR" id="Q45983"/>
<dbReference type="STRING" id="195.ATE51_00900"/>
<dbReference type="KEGG" id="ccof:VC76_06685"/>
<dbReference type="PATRIC" id="fig|195.282.peg.1325"/>
<dbReference type="eggNOG" id="COG1028">
    <property type="taxonomic scope" value="Bacteria"/>
</dbReference>
<dbReference type="GO" id="GO:0016616">
    <property type="term" value="F:oxidoreductase activity, acting on the CH-OH group of donors, NAD or NADP as acceptor"/>
    <property type="evidence" value="ECO:0007669"/>
    <property type="project" value="TreeGrafter"/>
</dbReference>
<dbReference type="GO" id="GO:0030497">
    <property type="term" value="P:fatty acid elongation"/>
    <property type="evidence" value="ECO:0007669"/>
    <property type="project" value="TreeGrafter"/>
</dbReference>
<dbReference type="CDD" id="cd08930">
    <property type="entry name" value="SDR_c8"/>
    <property type="match status" value="1"/>
</dbReference>
<dbReference type="Gene3D" id="3.40.50.720">
    <property type="entry name" value="NAD(P)-binding Rossmann-like Domain"/>
    <property type="match status" value="1"/>
</dbReference>
<dbReference type="InterPro" id="IPR036291">
    <property type="entry name" value="NAD(P)-bd_dom_sf"/>
</dbReference>
<dbReference type="InterPro" id="IPR002347">
    <property type="entry name" value="SDR_fam"/>
</dbReference>
<dbReference type="NCBIfam" id="NF006619">
    <property type="entry name" value="PRK09186.1"/>
    <property type="match status" value="1"/>
</dbReference>
<dbReference type="PANTHER" id="PTHR42760:SF40">
    <property type="entry name" value="3-OXOACYL-[ACYL-CARRIER-PROTEIN] REDUCTASE, CHLOROPLASTIC"/>
    <property type="match status" value="1"/>
</dbReference>
<dbReference type="PANTHER" id="PTHR42760">
    <property type="entry name" value="SHORT-CHAIN DEHYDROGENASES/REDUCTASES FAMILY MEMBER"/>
    <property type="match status" value="1"/>
</dbReference>
<dbReference type="Pfam" id="PF13561">
    <property type="entry name" value="adh_short_C2"/>
    <property type="match status" value="1"/>
</dbReference>
<dbReference type="PRINTS" id="PR00081">
    <property type="entry name" value="GDHRDH"/>
</dbReference>
<dbReference type="SUPFAM" id="SSF51735">
    <property type="entry name" value="NAD(P)-binding Rossmann-fold domains"/>
    <property type="match status" value="1"/>
</dbReference>
<proteinExistence type="inferred from homology"/>
<comment type="function">
    <text>Required for biosynthesis of LAH modification in the post-translational modification of Campylobacter coli flagellin.</text>
</comment>
<comment type="similarity">
    <text evidence="2">Belongs to the short-chain dehydrogenases/reductases (SDR) family.</text>
</comment>
<keyword id="KW-0560">Oxidoreductase</keyword>
<organism>
    <name type="scientific">Campylobacter coli</name>
    <dbReference type="NCBI Taxonomy" id="195"/>
    <lineage>
        <taxon>Bacteria</taxon>
        <taxon>Pseudomonadati</taxon>
        <taxon>Campylobacterota</taxon>
        <taxon>Epsilonproteobacteria</taxon>
        <taxon>Campylobacterales</taxon>
        <taxon>Campylobacteraceae</taxon>
        <taxon>Campylobacter</taxon>
    </lineage>
</organism>
<evidence type="ECO:0000250" key="1"/>
<evidence type="ECO:0000305" key="2"/>
<gene>
    <name type="primary">ptmA</name>
</gene>
<name>PTMA_CAMCO</name>